<evidence type="ECO:0000250" key="1"/>
<evidence type="ECO:0000269" key="2">
    <source>
    </source>
</evidence>
<evidence type="ECO:0000305" key="3"/>
<sequence>APAKRWFGHEECTYWLGPCEVDDTCCSASCESKFCGLW</sequence>
<protein>
    <recommendedName>
        <fullName>Conotoxin r7a</fullName>
    </recommendedName>
    <alternativeName>
        <fullName>Light sleeper</fullName>
    </alternativeName>
</protein>
<name>O27A_CONRA</name>
<reference key="1">
    <citation type="journal article" date="2004" name="Biochemistry">
        <title>Multiple 6-bromotryptophan residues in a sleep-inducing peptide.</title>
        <authorList>
            <person name="Jimenez E.C."/>
            <person name="Watkins M."/>
            <person name="Olivera B.M."/>
        </authorList>
    </citation>
    <scope>NUCLEOTIDE SEQUENCE [MRNA]</scope>
    <scope>PROTEIN SEQUENCE OF 6-38</scope>
    <scope>FUNCTION</scope>
    <scope>MASS SPECTROMETRY</scope>
    <scope>BROMINATION AT TRP-6; TRP-15 AND TRP-38</scope>
    <scope>GAMMA-CARBOXYGLUTAMATION AT GLU-10; GLU-11; GLU-20 AND GLU-31</scope>
    <source>
        <tissue>Venom</tissue>
        <tissue>Venom duct</tissue>
    </source>
</reference>
<comment type="function">
    <text evidence="2">Induces a sleep-like state in mice.</text>
</comment>
<comment type="subcellular location">
    <subcellularLocation>
        <location>Secreted</location>
    </subcellularLocation>
</comment>
<comment type="tissue specificity">
    <text>Expressed by the venom duct.</text>
</comment>
<comment type="domain">
    <text evidence="1">The presence of a 'disulfide through disulfide knot' structurally defines this protein as a knottin.</text>
</comment>
<comment type="domain">
    <text>The cysteine framework is VI/VII (C-C-CC-C-C).</text>
</comment>
<comment type="mass spectrometry"/>
<comment type="miscellaneous">
    <text>Equilibrates slowly between two distinct conformers. These two conformational states are clearly interconvertible.</text>
</comment>
<comment type="similarity">
    <text evidence="3">Belongs to the conotoxin O2 superfamily.</text>
</comment>
<proteinExistence type="evidence at protein level"/>
<dbReference type="SMR" id="P0C1M8"/>
<dbReference type="ConoServer" id="1495">
    <property type="toxin name" value="RVIIA precursor"/>
</dbReference>
<dbReference type="GO" id="GO:0005576">
    <property type="term" value="C:extracellular region"/>
    <property type="evidence" value="ECO:0007669"/>
    <property type="project" value="UniProtKB-SubCell"/>
</dbReference>
<dbReference type="GO" id="GO:0090729">
    <property type="term" value="F:toxin activity"/>
    <property type="evidence" value="ECO:0007669"/>
    <property type="project" value="UniProtKB-KW"/>
</dbReference>
<feature type="propeptide" id="PRO_0000246035" evidence="2">
    <location>
        <begin position="1" status="less than"/>
        <end position="5"/>
    </location>
</feature>
<feature type="peptide" id="PRO_0000246036" description="Conotoxin r7a">
    <location>
        <begin position="6"/>
        <end position="38"/>
    </location>
</feature>
<feature type="modified residue" description="6'-bromotryptophan" evidence="2">
    <location>
        <position position="6"/>
    </location>
</feature>
<feature type="modified residue" description="4-carboxyglutamate" evidence="2">
    <location>
        <position position="10"/>
    </location>
</feature>
<feature type="modified residue" description="4-carboxyglutamate" evidence="2">
    <location>
        <position position="11"/>
    </location>
</feature>
<feature type="modified residue" description="6'-bromotryptophan" evidence="2">
    <location>
        <position position="15"/>
    </location>
</feature>
<feature type="modified residue" description="4-carboxyglutamate" evidence="2">
    <location>
        <position position="20"/>
    </location>
</feature>
<feature type="modified residue" description="4-carboxyglutamate" evidence="2">
    <location>
        <position position="31"/>
    </location>
</feature>
<feature type="modified residue" description="6'-bromotryptophan" evidence="2">
    <location>
        <position position="38"/>
    </location>
</feature>
<feature type="disulfide bond" evidence="1">
    <location>
        <begin position="12"/>
        <end position="26"/>
    </location>
</feature>
<feature type="disulfide bond" evidence="1">
    <location>
        <begin position="19"/>
        <end position="30"/>
    </location>
</feature>
<feature type="disulfide bond" evidence="1">
    <location>
        <begin position="25"/>
        <end position="35"/>
    </location>
</feature>
<feature type="non-terminal residue">
    <location>
        <position position="1"/>
    </location>
</feature>
<keyword id="KW-0102">Bromination</keyword>
<keyword id="KW-0165">Cleavage on pair of basic residues</keyword>
<keyword id="KW-0903">Direct protein sequencing</keyword>
<keyword id="KW-1015">Disulfide bond</keyword>
<keyword id="KW-0301">Gamma-carboxyglutamic acid</keyword>
<keyword id="KW-0960">Knottin</keyword>
<keyword id="KW-0528">Neurotoxin</keyword>
<keyword id="KW-0964">Secreted</keyword>
<keyword id="KW-0800">Toxin</keyword>
<organism>
    <name type="scientific">Conus radiatus</name>
    <name type="common">Rayed cone</name>
    <dbReference type="NCBI Taxonomy" id="61198"/>
    <lineage>
        <taxon>Eukaryota</taxon>
        <taxon>Metazoa</taxon>
        <taxon>Spiralia</taxon>
        <taxon>Lophotrochozoa</taxon>
        <taxon>Mollusca</taxon>
        <taxon>Gastropoda</taxon>
        <taxon>Caenogastropoda</taxon>
        <taxon>Neogastropoda</taxon>
        <taxon>Conoidea</taxon>
        <taxon>Conidae</taxon>
        <taxon>Conus</taxon>
        <taxon>Phasmoconus</taxon>
    </lineage>
</organism>
<accession>P0C1M8</accession>